<feature type="transit peptide" description="Mitochondrion" evidence="2">
    <location>
        <begin position="1"/>
        <end status="unknown"/>
    </location>
</feature>
<feature type="chain" id="PRO_0000285325" description="Exonuclease V, mitochondrial">
    <location>
        <begin status="unknown"/>
        <end position="573"/>
    </location>
</feature>
<feature type="binding site" evidence="1">
    <location>
        <position position="90"/>
    </location>
    <ligand>
        <name>[4Fe-4S] cluster</name>
        <dbReference type="ChEBI" id="CHEBI:49883"/>
    </ligand>
</feature>
<feature type="binding site" evidence="1">
    <location>
        <position position="538"/>
    </location>
    <ligand>
        <name>[4Fe-4S] cluster</name>
        <dbReference type="ChEBI" id="CHEBI:49883"/>
    </ligand>
</feature>
<feature type="binding site" evidence="1">
    <location>
        <position position="541"/>
    </location>
    <ligand>
        <name>[4Fe-4S] cluster</name>
        <dbReference type="ChEBI" id="CHEBI:49883"/>
    </ligand>
</feature>
<feature type="binding site" evidence="1">
    <location>
        <position position="547"/>
    </location>
    <ligand>
        <name>[4Fe-4S] cluster</name>
        <dbReference type="ChEBI" id="CHEBI:49883"/>
    </ligand>
</feature>
<name>EXO5_PICST</name>
<accession>A3M0E6</accession>
<sequence length="573" mass="65941">MRAKSILKQFLLPRDKNSSEVGKSDSIELFPNDSLHSLYANWHLPGSHMLPLYNPTNISPYEFHSRFNSDQSYKRSPRLSVTKLLTDRWCELSEYYTIYAGSPQFKVTNAITQGLERHSELEYELHQPIDISLLMETLSGSISDAISHFQATIKDVKDPDLLSELDGNPDAAKLAMEWSDHSINRLFSLITTSEAREVLVHGFLNLENSEFVSSIDELKNSQNGNIDIRKVLVSGIVDHFKIENLEDPTDLSLFREIRDYMDYYFDTTIGDKQVIDLTKFLQSVKQFVEEHKSAFSVKTTDVKTRSVNRLPSSISVLEAAKFQTFYYRKMFGLLSNEHQRTENNHFAYYSLLENARVRGIDVDEPLDIVTLVSILRKNYNLFYLDFVKLANGEPIGFEPFDSYNKGRENTGFALDSVFGIAEKCLLAGKPMQLDLIEKINSLEDFNYDEILSPDLIKNWKTAPTLRYLAARCAQFYELFSELLGDHTAVEYHNGRTSQAFHTSESKYTEDVIGEQTRKASTFWNGKRFPIYTRDLSKCNYCDFKPRCMVPNHQLQGDLYRKSLGAKINEFLHS</sequence>
<reference key="1">
    <citation type="journal article" date="2007" name="Nat. Biotechnol.">
        <title>Genome sequence of the lignocellulose-bioconverting and xylose-fermenting yeast Pichia stipitis.</title>
        <authorList>
            <person name="Jeffries T.W."/>
            <person name="Grigoriev I.V."/>
            <person name="Grimwood J."/>
            <person name="Laplaza J.M."/>
            <person name="Aerts A."/>
            <person name="Salamov A."/>
            <person name="Schmutz J."/>
            <person name="Lindquist E."/>
            <person name="Dehal P."/>
            <person name="Shapiro H."/>
            <person name="Jin Y.-S."/>
            <person name="Passoth V."/>
            <person name="Richardson P.M."/>
        </authorList>
    </citation>
    <scope>NUCLEOTIDE SEQUENCE [LARGE SCALE GENOMIC DNA]</scope>
    <source>
        <strain>ATCC 58785 / CBS 6054 / NBRC 10063 / NRRL Y-11545</strain>
    </source>
</reference>
<organism>
    <name type="scientific">Scheffersomyces stipitis (strain ATCC 58785 / CBS 6054 / NBRC 10063 / NRRL Y-11545)</name>
    <name type="common">Yeast</name>
    <name type="synonym">Pichia stipitis</name>
    <dbReference type="NCBI Taxonomy" id="322104"/>
    <lineage>
        <taxon>Eukaryota</taxon>
        <taxon>Fungi</taxon>
        <taxon>Dikarya</taxon>
        <taxon>Ascomycota</taxon>
        <taxon>Saccharomycotina</taxon>
        <taxon>Pichiomycetes</taxon>
        <taxon>Debaryomycetaceae</taxon>
        <taxon>Scheffersomyces</taxon>
    </lineage>
</organism>
<evidence type="ECO:0000250" key="1"/>
<evidence type="ECO:0000255" key="2"/>
<evidence type="ECO:0000305" key="3"/>
<comment type="function">
    <text evidence="1">Single strand DNA specific 5' exonuclease involved in mitochondrial DNA replication and recombination. Releases dinucleotides as main products of catalysis. Has the capacity to slide across 5'double-stranded DNA or 5'RNA sequences and resumes cutting two nucleotides downstream of the double-stranded-to-single-stranded junction or RNA-to-DNA junction, respectively (By similarity).</text>
</comment>
<comment type="cofactor">
    <cofactor evidence="1">
        <name>Mg(2+)</name>
        <dbReference type="ChEBI" id="CHEBI:18420"/>
    </cofactor>
</comment>
<comment type="cofactor">
    <cofactor evidence="1">
        <name>[4Fe-4S] cluster</name>
        <dbReference type="ChEBI" id="CHEBI:49883"/>
    </cofactor>
    <text evidence="1">Binds 1 [4Fe-4S] cluster.</text>
</comment>
<comment type="subunit">
    <text evidence="1">Monomer.</text>
</comment>
<comment type="subcellular location">
    <subcellularLocation>
        <location>Mitochondrion</location>
    </subcellularLocation>
</comment>
<comment type="similarity">
    <text evidence="3">Belongs to the EXO5 family.</text>
</comment>
<comment type="sequence caution" evidence="3">
    <conflict type="erroneous initiation">
        <sequence resource="EMBL-CDS" id="ABN68512"/>
    </conflict>
    <text>Truncated N-terminus.</text>
</comment>
<keyword id="KW-0004">4Fe-4S</keyword>
<keyword id="KW-0238">DNA-binding</keyword>
<keyword id="KW-0269">Exonuclease</keyword>
<keyword id="KW-0378">Hydrolase</keyword>
<keyword id="KW-0408">Iron</keyword>
<keyword id="KW-0411">Iron-sulfur</keyword>
<keyword id="KW-0460">Magnesium</keyword>
<keyword id="KW-0479">Metal-binding</keyword>
<keyword id="KW-0496">Mitochondrion</keyword>
<keyword id="KW-0540">Nuclease</keyword>
<keyword id="KW-1185">Reference proteome</keyword>
<keyword id="KW-0809">Transit peptide</keyword>
<proteinExistence type="inferred from homology"/>
<protein>
    <recommendedName>
        <fullName>Exonuclease V, mitochondrial</fullName>
        <shortName>Exo V</shortName>
        <ecNumber>3.1.-.-</ecNumber>
    </recommendedName>
    <alternativeName>
        <fullName>Defects in morphology protein 1</fullName>
    </alternativeName>
</protein>
<gene>
    <name type="primary">EXO5</name>
    <name type="synonym">DEM1</name>
    <name type="ORF">PICST_64329</name>
</gene>
<dbReference type="EC" id="3.1.-.-"/>
<dbReference type="EMBL" id="CP000502">
    <property type="protein sequence ID" value="ABN68512.2"/>
    <property type="status" value="ALT_INIT"/>
    <property type="molecule type" value="Genomic_DNA"/>
</dbReference>
<dbReference type="RefSeq" id="XP_001386541.2">
    <property type="nucleotide sequence ID" value="XM_001386504.1"/>
</dbReference>
<dbReference type="FunCoup" id="A3M0E6">
    <property type="interactions" value="18"/>
</dbReference>
<dbReference type="STRING" id="322104.A3M0E6"/>
<dbReference type="GeneID" id="4840960"/>
<dbReference type="KEGG" id="pic:PICST_64329"/>
<dbReference type="eggNOG" id="ENOG502QR0P">
    <property type="taxonomic scope" value="Eukaryota"/>
</dbReference>
<dbReference type="HOGENOM" id="CLU_019985_0_0_1"/>
<dbReference type="InParanoid" id="A3M0E6"/>
<dbReference type="OrthoDB" id="354769at2759"/>
<dbReference type="Proteomes" id="UP000002258">
    <property type="component" value="Chromosome 8"/>
</dbReference>
<dbReference type="GO" id="GO:0005739">
    <property type="term" value="C:mitochondrion"/>
    <property type="evidence" value="ECO:0007669"/>
    <property type="project" value="UniProtKB-SubCell"/>
</dbReference>
<dbReference type="GO" id="GO:0005634">
    <property type="term" value="C:nucleus"/>
    <property type="evidence" value="ECO:0007669"/>
    <property type="project" value="TreeGrafter"/>
</dbReference>
<dbReference type="GO" id="GO:0051539">
    <property type="term" value="F:4 iron, 4 sulfur cluster binding"/>
    <property type="evidence" value="ECO:0007669"/>
    <property type="project" value="UniProtKB-KW"/>
</dbReference>
<dbReference type="GO" id="GO:0003677">
    <property type="term" value="F:DNA binding"/>
    <property type="evidence" value="ECO:0007669"/>
    <property type="project" value="UniProtKB-KW"/>
</dbReference>
<dbReference type="GO" id="GO:0046872">
    <property type="term" value="F:metal ion binding"/>
    <property type="evidence" value="ECO:0007669"/>
    <property type="project" value="UniProtKB-KW"/>
</dbReference>
<dbReference type="GO" id="GO:0045145">
    <property type="term" value="F:single-stranded DNA 5'-3' DNA exonuclease activity"/>
    <property type="evidence" value="ECO:0007669"/>
    <property type="project" value="InterPro"/>
</dbReference>
<dbReference type="GO" id="GO:0036297">
    <property type="term" value="P:interstrand cross-link repair"/>
    <property type="evidence" value="ECO:0007669"/>
    <property type="project" value="TreeGrafter"/>
</dbReference>
<dbReference type="InterPro" id="IPR019190">
    <property type="entry name" value="EXOV"/>
</dbReference>
<dbReference type="PANTHER" id="PTHR14464">
    <property type="entry name" value="EXONUCLEASE V"/>
    <property type="match status" value="1"/>
</dbReference>
<dbReference type="PANTHER" id="PTHR14464:SF4">
    <property type="entry name" value="EXONUCLEASE V"/>
    <property type="match status" value="1"/>
</dbReference>
<dbReference type="Pfam" id="PF09810">
    <property type="entry name" value="Exo5"/>
    <property type="match status" value="2"/>
</dbReference>